<reference key="1">
    <citation type="journal article" date="2005" name="Nat. Biotechnol.">
        <title>Complete genome sequence of the plant commensal Pseudomonas fluorescens Pf-5.</title>
        <authorList>
            <person name="Paulsen I.T."/>
            <person name="Press C.M."/>
            <person name="Ravel J."/>
            <person name="Kobayashi D.Y."/>
            <person name="Myers G.S.A."/>
            <person name="Mavrodi D.V."/>
            <person name="DeBoy R.T."/>
            <person name="Seshadri R."/>
            <person name="Ren Q."/>
            <person name="Madupu R."/>
            <person name="Dodson R.J."/>
            <person name="Durkin A.S."/>
            <person name="Brinkac L.M."/>
            <person name="Daugherty S.C."/>
            <person name="Sullivan S.A."/>
            <person name="Rosovitz M.J."/>
            <person name="Gwinn M.L."/>
            <person name="Zhou L."/>
            <person name="Schneider D.J."/>
            <person name="Cartinhour S.W."/>
            <person name="Nelson W.C."/>
            <person name="Weidman J."/>
            <person name="Watkins K."/>
            <person name="Tran K."/>
            <person name="Khouri H."/>
            <person name="Pierson E.A."/>
            <person name="Pierson L.S. III"/>
            <person name="Thomashow L.S."/>
            <person name="Loper J.E."/>
        </authorList>
    </citation>
    <scope>NUCLEOTIDE SEQUENCE [LARGE SCALE GENOMIC DNA]</scope>
    <source>
        <strain>ATCC BAA-477 / NRRL B-23932 / Pf-5</strain>
    </source>
</reference>
<accession>Q4K4Z4</accession>
<evidence type="ECO:0000255" key="1">
    <source>
        <dbReference type="HAMAP-Rule" id="MF_00495"/>
    </source>
</evidence>
<comment type="function">
    <text evidence="1">Specifically catalyzes the dephosphorylation of 2-phosphoglycolate. Is involved in the dissimilation of the intracellular 2-phosphoglycolate formed during the DNA repair of 3'-phosphoglycolate ends, a major class of DNA lesions induced by oxidative stress.</text>
</comment>
<comment type="catalytic activity">
    <reaction evidence="1">
        <text>2-phosphoglycolate + H2O = glycolate + phosphate</text>
        <dbReference type="Rhea" id="RHEA:14369"/>
        <dbReference type="ChEBI" id="CHEBI:15377"/>
        <dbReference type="ChEBI" id="CHEBI:29805"/>
        <dbReference type="ChEBI" id="CHEBI:43474"/>
        <dbReference type="ChEBI" id="CHEBI:58033"/>
        <dbReference type="EC" id="3.1.3.18"/>
    </reaction>
</comment>
<comment type="cofactor">
    <cofactor evidence="1">
        <name>Mg(2+)</name>
        <dbReference type="ChEBI" id="CHEBI:18420"/>
    </cofactor>
</comment>
<comment type="pathway">
    <text evidence="1">Organic acid metabolism; glycolate biosynthesis; glycolate from 2-phosphoglycolate: step 1/1.</text>
</comment>
<comment type="similarity">
    <text evidence="1">Belongs to the HAD-like hydrolase superfamily. CbbY/CbbZ/Gph/YieH family.</text>
</comment>
<proteinExistence type="inferred from homology"/>
<sequence length="272" mass="29893">MSAFEQLFQGRLPRLVMFDLDGTLVDSVPDLAAAVDQMLLKLGRKPAGVEAVREWVGNGAPMLVRRALANSLEAQGVDDVEAEYALELFNTAYEDSHELTVVYPGARETLKWLHKQGVEMALITNKPERFVAPLLDQMKIGRYFRWIIGGDTLPQKKPDPAALFFVMKMASVPASQSLFVGDSRSDVLAAKAAGVKCVALSYGYNHGRPIAEESPALVIDNLRALIPGCLEPAAEITLPDAVPSHSGNSIVVVTRKLWMKVIKALARWRWRA</sequence>
<feature type="chain" id="PRO_0000238166" description="Phosphoglycolate phosphatase">
    <location>
        <begin position="1"/>
        <end position="272"/>
    </location>
</feature>
<feature type="active site" description="Nucleophile" evidence="1">
    <location>
        <position position="19"/>
    </location>
</feature>
<feature type="binding site" evidence="1">
    <location>
        <position position="19"/>
    </location>
    <ligand>
        <name>Mg(2+)</name>
        <dbReference type="ChEBI" id="CHEBI:18420"/>
    </ligand>
</feature>
<feature type="binding site" evidence="1">
    <location>
        <position position="21"/>
    </location>
    <ligand>
        <name>Mg(2+)</name>
        <dbReference type="ChEBI" id="CHEBI:18420"/>
    </ligand>
</feature>
<feature type="binding site" evidence="1">
    <location>
        <position position="182"/>
    </location>
    <ligand>
        <name>Mg(2+)</name>
        <dbReference type="ChEBI" id="CHEBI:18420"/>
    </ligand>
</feature>
<dbReference type="EC" id="3.1.3.18" evidence="1"/>
<dbReference type="EMBL" id="CP000076">
    <property type="protein sequence ID" value="AAY94823.1"/>
    <property type="molecule type" value="Genomic_DNA"/>
</dbReference>
<dbReference type="RefSeq" id="WP_011063808.1">
    <property type="nucleotide sequence ID" value="NC_004129.6"/>
</dbReference>
<dbReference type="SMR" id="Q4K4Z4"/>
<dbReference type="STRING" id="220664.PFL_5630"/>
<dbReference type="KEGG" id="pfl:PFL_5630"/>
<dbReference type="PATRIC" id="fig|220664.5.peg.5742"/>
<dbReference type="eggNOG" id="COG0546">
    <property type="taxonomic scope" value="Bacteria"/>
</dbReference>
<dbReference type="HOGENOM" id="CLU_045011_19_1_6"/>
<dbReference type="UniPathway" id="UPA00865">
    <property type="reaction ID" value="UER00834"/>
</dbReference>
<dbReference type="Proteomes" id="UP000008540">
    <property type="component" value="Chromosome"/>
</dbReference>
<dbReference type="GO" id="GO:0005829">
    <property type="term" value="C:cytosol"/>
    <property type="evidence" value="ECO:0007669"/>
    <property type="project" value="TreeGrafter"/>
</dbReference>
<dbReference type="GO" id="GO:0046872">
    <property type="term" value="F:metal ion binding"/>
    <property type="evidence" value="ECO:0007669"/>
    <property type="project" value="UniProtKB-KW"/>
</dbReference>
<dbReference type="GO" id="GO:0008967">
    <property type="term" value="F:phosphoglycolate phosphatase activity"/>
    <property type="evidence" value="ECO:0007669"/>
    <property type="project" value="UniProtKB-UniRule"/>
</dbReference>
<dbReference type="GO" id="GO:0005975">
    <property type="term" value="P:carbohydrate metabolic process"/>
    <property type="evidence" value="ECO:0007669"/>
    <property type="project" value="InterPro"/>
</dbReference>
<dbReference type="GO" id="GO:0006281">
    <property type="term" value="P:DNA repair"/>
    <property type="evidence" value="ECO:0007669"/>
    <property type="project" value="TreeGrafter"/>
</dbReference>
<dbReference type="GO" id="GO:0046295">
    <property type="term" value="P:glycolate biosynthetic process"/>
    <property type="evidence" value="ECO:0007669"/>
    <property type="project" value="UniProtKB-UniRule"/>
</dbReference>
<dbReference type="CDD" id="cd16417">
    <property type="entry name" value="HAD_PGPase"/>
    <property type="match status" value="1"/>
</dbReference>
<dbReference type="FunFam" id="3.40.50.1000:FF:000022">
    <property type="entry name" value="Phosphoglycolate phosphatase"/>
    <property type="match status" value="1"/>
</dbReference>
<dbReference type="Gene3D" id="3.40.50.1000">
    <property type="entry name" value="HAD superfamily/HAD-like"/>
    <property type="match status" value="1"/>
</dbReference>
<dbReference type="Gene3D" id="1.10.150.240">
    <property type="entry name" value="Putative phosphatase, domain 2"/>
    <property type="match status" value="1"/>
</dbReference>
<dbReference type="HAMAP" id="MF_00495">
    <property type="entry name" value="GPH_hydrolase_bact"/>
    <property type="match status" value="1"/>
</dbReference>
<dbReference type="InterPro" id="IPR050155">
    <property type="entry name" value="HAD-like_hydrolase_sf"/>
</dbReference>
<dbReference type="InterPro" id="IPR036412">
    <property type="entry name" value="HAD-like_sf"/>
</dbReference>
<dbReference type="InterPro" id="IPR006439">
    <property type="entry name" value="HAD-SF_hydro_IA"/>
</dbReference>
<dbReference type="InterPro" id="IPR041492">
    <property type="entry name" value="HAD_2"/>
</dbReference>
<dbReference type="InterPro" id="IPR023214">
    <property type="entry name" value="HAD_sf"/>
</dbReference>
<dbReference type="InterPro" id="IPR023198">
    <property type="entry name" value="PGP-like_dom2"/>
</dbReference>
<dbReference type="InterPro" id="IPR037512">
    <property type="entry name" value="PGPase_prok"/>
</dbReference>
<dbReference type="NCBIfam" id="TIGR01549">
    <property type="entry name" value="HAD-SF-IA-v1"/>
    <property type="match status" value="1"/>
</dbReference>
<dbReference type="NCBIfam" id="TIGR01509">
    <property type="entry name" value="HAD-SF-IA-v3"/>
    <property type="match status" value="1"/>
</dbReference>
<dbReference type="NCBIfam" id="TIGR01449">
    <property type="entry name" value="PGP_bact"/>
    <property type="match status" value="1"/>
</dbReference>
<dbReference type="NCBIfam" id="NF009695">
    <property type="entry name" value="PRK13222.1-2"/>
    <property type="match status" value="1"/>
</dbReference>
<dbReference type="NCBIfam" id="NF009698">
    <property type="entry name" value="PRK13223.1"/>
    <property type="match status" value="1"/>
</dbReference>
<dbReference type="PANTHER" id="PTHR43434">
    <property type="entry name" value="PHOSPHOGLYCOLATE PHOSPHATASE"/>
    <property type="match status" value="1"/>
</dbReference>
<dbReference type="PANTHER" id="PTHR43434:SF1">
    <property type="entry name" value="PHOSPHOGLYCOLATE PHOSPHATASE"/>
    <property type="match status" value="1"/>
</dbReference>
<dbReference type="Pfam" id="PF13419">
    <property type="entry name" value="HAD_2"/>
    <property type="match status" value="1"/>
</dbReference>
<dbReference type="PRINTS" id="PR00413">
    <property type="entry name" value="HADHALOGNASE"/>
</dbReference>
<dbReference type="SFLD" id="SFLDG01135">
    <property type="entry name" value="C1.5.6:_HAD__Beta-PGM__Phospha"/>
    <property type="match status" value="1"/>
</dbReference>
<dbReference type="SFLD" id="SFLDG01129">
    <property type="entry name" value="C1.5:_HAD__Beta-PGM__Phosphata"/>
    <property type="match status" value="1"/>
</dbReference>
<dbReference type="SUPFAM" id="SSF56784">
    <property type="entry name" value="HAD-like"/>
    <property type="match status" value="1"/>
</dbReference>
<gene>
    <name type="ordered locus">PFL_5630</name>
</gene>
<organism>
    <name type="scientific">Pseudomonas fluorescens (strain ATCC BAA-477 / NRRL B-23932 / Pf-5)</name>
    <dbReference type="NCBI Taxonomy" id="220664"/>
    <lineage>
        <taxon>Bacteria</taxon>
        <taxon>Pseudomonadati</taxon>
        <taxon>Pseudomonadota</taxon>
        <taxon>Gammaproteobacteria</taxon>
        <taxon>Pseudomonadales</taxon>
        <taxon>Pseudomonadaceae</taxon>
        <taxon>Pseudomonas</taxon>
    </lineage>
</organism>
<name>GPH_PSEF5</name>
<protein>
    <recommendedName>
        <fullName evidence="1">Phosphoglycolate phosphatase</fullName>
        <shortName evidence="1">PGP</shortName>
        <shortName evidence="1">PGPase</shortName>
        <ecNumber evidence="1">3.1.3.18</ecNumber>
    </recommendedName>
</protein>
<keyword id="KW-0119">Carbohydrate metabolism</keyword>
<keyword id="KW-0868">Chloride</keyword>
<keyword id="KW-0378">Hydrolase</keyword>
<keyword id="KW-0460">Magnesium</keyword>
<keyword id="KW-0479">Metal-binding</keyword>